<proteinExistence type="inferred from homology"/>
<evidence type="ECO:0000255" key="1"/>
<evidence type="ECO:0000255" key="2">
    <source>
        <dbReference type="PROSITE-ProRule" id="PRU00521"/>
    </source>
</evidence>
<evidence type="ECO:0000269" key="3">
    <source>
    </source>
</evidence>
<evidence type="ECO:0000305" key="4"/>
<organism>
    <name type="scientific">Homo sapiens</name>
    <name type="common">Human</name>
    <dbReference type="NCBI Taxonomy" id="9606"/>
    <lineage>
        <taxon>Eukaryota</taxon>
        <taxon>Metazoa</taxon>
        <taxon>Chordata</taxon>
        <taxon>Craniata</taxon>
        <taxon>Vertebrata</taxon>
        <taxon>Euteleostomi</taxon>
        <taxon>Mammalia</taxon>
        <taxon>Eutheria</taxon>
        <taxon>Euarchontoglires</taxon>
        <taxon>Primates</taxon>
        <taxon>Haplorrhini</taxon>
        <taxon>Catarrhini</taxon>
        <taxon>Hominidae</taxon>
        <taxon>Homo</taxon>
    </lineage>
</organism>
<name>O5AC2_HUMAN</name>
<protein>
    <recommendedName>
        <fullName>Olfactory receptor 5AC2</fullName>
    </recommendedName>
    <alternativeName>
        <fullName>HSA1</fullName>
    </alternativeName>
</protein>
<keyword id="KW-1003">Cell membrane</keyword>
<keyword id="KW-1015">Disulfide bond</keyword>
<keyword id="KW-0297">G-protein coupled receptor</keyword>
<keyword id="KW-0325">Glycoprotein</keyword>
<keyword id="KW-0472">Membrane</keyword>
<keyword id="KW-0552">Olfaction</keyword>
<keyword id="KW-0675">Receptor</keyword>
<keyword id="KW-1185">Reference proteome</keyword>
<keyword id="KW-0716">Sensory transduction</keyword>
<keyword id="KW-0807">Transducer</keyword>
<keyword id="KW-0812">Transmembrane</keyword>
<keyword id="KW-1133">Transmembrane helix</keyword>
<feature type="chain" id="PRO_0000150574" description="Olfactory receptor 5AC2">
    <location>
        <begin position="1"/>
        <end position="309"/>
    </location>
</feature>
<feature type="topological domain" description="Extracellular" evidence="1">
    <location>
        <begin position="1"/>
        <end position="27"/>
    </location>
</feature>
<feature type="transmembrane region" description="Helical; Name=1" evidence="1">
    <location>
        <begin position="28"/>
        <end position="48"/>
    </location>
</feature>
<feature type="topological domain" description="Cytoplasmic" evidence="1">
    <location>
        <begin position="49"/>
        <end position="56"/>
    </location>
</feature>
<feature type="transmembrane region" description="Helical; Name=2" evidence="1">
    <location>
        <begin position="57"/>
        <end position="77"/>
    </location>
</feature>
<feature type="topological domain" description="Extracellular" evidence="1">
    <location>
        <begin position="78"/>
        <end position="101"/>
    </location>
</feature>
<feature type="transmembrane region" description="Helical; Name=3" evidence="1">
    <location>
        <begin position="102"/>
        <end position="122"/>
    </location>
</feature>
<feature type="topological domain" description="Cytoplasmic" evidence="1">
    <location>
        <begin position="123"/>
        <end position="135"/>
    </location>
</feature>
<feature type="transmembrane region" description="Helical; Name=4" evidence="1">
    <location>
        <begin position="136"/>
        <end position="156"/>
    </location>
</feature>
<feature type="topological domain" description="Extracellular" evidence="1">
    <location>
        <begin position="157"/>
        <end position="198"/>
    </location>
</feature>
<feature type="transmembrane region" description="Helical; Name=5" evidence="1">
    <location>
        <begin position="199"/>
        <end position="219"/>
    </location>
</feature>
<feature type="topological domain" description="Cytoplasmic" evidence="1">
    <location>
        <begin position="220"/>
        <end position="239"/>
    </location>
</feature>
<feature type="transmembrane region" description="Helical; Name=6" evidence="1">
    <location>
        <begin position="240"/>
        <end position="260"/>
    </location>
</feature>
<feature type="topological domain" description="Extracellular" evidence="1">
    <location>
        <begin position="261"/>
        <end position="273"/>
    </location>
</feature>
<feature type="transmembrane region" description="Helical; Name=7" evidence="1">
    <location>
        <begin position="274"/>
        <end position="294"/>
    </location>
</feature>
<feature type="topological domain" description="Cytoplasmic" evidence="1">
    <location>
        <begin position="295"/>
        <end position="309"/>
    </location>
</feature>
<feature type="glycosylation site" description="N-linked (GlcNAc...) asparagine" evidence="1">
    <location>
        <position position="7"/>
    </location>
</feature>
<feature type="disulfide bond" evidence="2">
    <location>
        <begin position="99"/>
        <end position="191"/>
    </location>
</feature>
<feature type="sequence variant" id="VAR_034214" description="In dbSNP:rs4518168." evidence="3">
    <original>M</original>
    <variation>I</variation>
    <location>
        <position position="200"/>
    </location>
</feature>
<gene>
    <name type="primary">OR5AC2</name>
</gene>
<sequence length="309" mass="35304">MDISEGNKTLVTEFVLTGLTDRPWLHVLFFVVFLVVYLITMVGNLGLIVLIWNDPHLHMPMYLFLGGLAFSDACTSTSITPRMLVNFLDKTAMISLAECITQFYFFASSATTECFLLVMMAYDRYVAICNPLLYPVMMSNKLSAQLLSISYVIGFLHPLVHVSLLLRLTFCRFNIIHYFYCEILQLFKISCNGPSINALMIFIFGAFIQIPTLMTIIISYTRVLFDILKKKSEKGRSKAFSTCGAHLLSVSLYYGTLIFMYVRPASGLAEDQDKVYSLFYTIIIPLLNPFIYSLRNKKVMHALRRVIRK</sequence>
<accession>Q9NZP5</accession>
<dbReference type="EMBL" id="AC133439">
    <property type="status" value="NOT_ANNOTATED_CDS"/>
    <property type="molecule type" value="Genomic_DNA"/>
</dbReference>
<dbReference type="EMBL" id="AF179759">
    <property type="protein sequence ID" value="AAF40348.1"/>
    <property type="molecule type" value="Genomic_DNA"/>
</dbReference>
<dbReference type="CCDS" id="CCDS33796.1"/>
<dbReference type="RefSeq" id="NP_473447.1">
    <property type="nucleotide sequence ID" value="NM_054106.1"/>
</dbReference>
<dbReference type="SMR" id="Q9NZP5"/>
<dbReference type="BioGRID" id="123356">
    <property type="interactions" value="1"/>
</dbReference>
<dbReference type="FunCoup" id="Q9NZP5">
    <property type="interactions" value="417"/>
</dbReference>
<dbReference type="IntAct" id="Q9NZP5">
    <property type="interactions" value="1"/>
</dbReference>
<dbReference type="STRING" id="9606.ENSP00000351466"/>
<dbReference type="GlyCosmos" id="Q9NZP5">
    <property type="glycosylation" value="1 site, No reported glycans"/>
</dbReference>
<dbReference type="GlyGen" id="Q9NZP5">
    <property type="glycosylation" value="1 site"/>
</dbReference>
<dbReference type="iPTMnet" id="Q9NZP5"/>
<dbReference type="PhosphoSitePlus" id="Q9NZP5"/>
<dbReference type="BioMuta" id="OR5AC2"/>
<dbReference type="DMDM" id="85541038"/>
<dbReference type="jPOST" id="Q9NZP5"/>
<dbReference type="MassIVE" id="Q9NZP5"/>
<dbReference type="PaxDb" id="9606-ENSP00000351466"/>
<dbReference type="PeptideAtlas" id="Q9NZP5"/>
<dbReference type="Antibodypedia" id="66601">
    <property type="antibodies" value="55 antibodies from 13 providers"/>
</dbReference>
<dbReference type="DNASU" id="81050"/>
<dbReference type="Ensembl" id="ENST00000358642.2">
    <property type="protein sequence ID" value="ENSP00000351466.2"/>
    <property type="gene ID" value="ENSG00000196578.4"/>
</dbReference>
<dbReference type="GeneID" id="81050"/>
<dbReference type="KEGG" id="hsa:81050"/>
<dbReference type="MANE-Select" id="ENST00000358642.2">
    <property type="protein sequence ID" value="ENSP00000351466.2"/>
    <property type="RefSeq nucleotide sequence ID" value="NM_054106.1"/>
    <property type="RefSeq protein sequence ID" value="NP_473447.1"/>
</dbReference>
<dbReference type="UCSC" id="uc011bgs.2">
    <property type="organism name" value="human"/>
</dbReference>
<dbReference type="AGR" id="HGNC:15431"/>
<dbReference type="CTD" id="81050"/>
<dbReference type="DisGeNET" id="81050"/>
<dbReference type="GeneCards" id="OR5AC2"/>
<dbReference type="HGNC" id="HGNC:15431">
    <property type="gene designation" value="OR5AC2"/>
</dbReference>
<dbReference type="HPA" id="ENSG00000196578">
    <property type="expression patterns" value="Not detected"/>
</dbReference>
<dbReference type="MalaCards" id="OR5AC2"/>
<dbReference type="neXtProt" id="NX_Q9NZP5"/>
<dbReference type="OpenTargets" id="ENSG00000196578"/>
<dbReference type="PharmGKB" id="PA32457"/>
<dbReference type="VEuPathDB" id="HostDB:ENSG00000196578"/>
<dbReference type="eggNOG" id="ENOG502RU05">
    <property type="taxonomic scope" value="Eukaryota"/>
</dbReference>
<dbReference type="GeneTree" id="ENSGT01120000271834"/>
<dbReference type="HOGENOM" id="CLU_012526_1_0_1"/>
<dbReference type="InParanoid" id="Q9NZP5"/>
<dbReference type="OMA" id="CRFNIIH"/>
<dbReference type="OrthoDB" id="9615015at2759"/>
<dbReference type="PAN-GO" id="Q9NZP5">
    <property type="GO annotations" value="2 GO annotations based on evolutionary models"/>
</dbReference>
<dbReference type="PhylomeDB" id="Q9NZP5"/>
<dbReference type="TreeFam" id="TF352737"/>
<dbReference type="PathwayCommons" id="Q9NZP5"/>
<dbReference type="Reactome" id="R-HSA-9752946">
    <property type="pathway name" value="Expression and translocation of olfactory receptors"/>
</dbReference>
<dbReference type="SignaLink" id="Q9NZP5"/>
<dbReference type="BioGRID-ORCS" id="81050">
    <property type="hits" value="4 hits in 705 CRISPR screens"/>
</dbReference>
<dbReference type="GeneWiki" id="OR5AC2"/>
<dbReference type="GenomeRNAi" id="81050"/>
<dbReference type="Pharos" id="Q9NZP5">
    <property type="development level" value="Tdark"/>
</dbReference>
<dbReference type="PRO" id="PR:Q9NZP5"/>
<dbReference type="Proteomes" id="UP000005640">
    <property type="component" value="Chromosome 3"/>
</dbReference>
<dbReference type="RNAct" id="Q9NZP5">
    <property type="molecule type" value="protein"/>
</dbReference>
<dbReference type="GO" id="GO:0016020">
    <property type="term" value="C:membrane"/>
    <property type="evidence" value="ECO:0000303"/>
    <property type="project" value="UniProtKB"/>
</dbReference>
<dbReference type="GO" id="GO:0005886">
    <property type="term" value="C:plasma membrane"/>
    <property type="evidence" value="ECO:0007669"/>
    <property type="project" value="UniProtKB-SubCell"/>
</dbReference>
<dbReference type="GO" id="GO:0004930">
    <property type="term" value="F:G protein-coupled receptor activity"/>
    <property type="evidence" value="ECO:0007669"/>
    <property type="project" value="UniProtKB-KW"/>
</dbReference>
<dbReference type="GO" id="GO:0005549">
    <property type="term" value="F:odorant binding"/>
    <property type="evidence" value="ECO:0000318"/>
    <property type="project" value="GO_Central"/>
</dbReference>
<dbReference type="GO" id="GO:0004984">
    <property type="term" value="F:olfactory receptor activity"/>
    <property type="evidence" value="ECO:0000318"/>
    <property type="project" value="GO_Central"/>
</dbReference>
<dbReference type="GO" id="GO:0007608">
    <property type="term" value="P:sensory perception of smell"/>
    <property type="evidence" value="ECO:0000303"/>
    <property type="project" value="UniProtKB"/>
</dbReference>
<dbReference type="FunFam" id="1.20.1070.10:FF:000004">
    <property type="entry name" value="Olfactory receptor"/>
    <property type="match status" value="1"/>
</dbReference>
<dbReference type="Gene3D" id="1.20.1070.10">
    <property type="entry name" value="Rhodopsin 7-helix transmembrane proteins"/>
    <property type="match status" value="1"/>
</dbReference>
<dbReference type="InterPro" id="IPR000276">
    <property type="entry name" value="GPCR_Rhodpsn"/>
</dbReference>
<dbReference type="InterPro" id="IPR017452">
    <property type="entry name" value="GPCR_Rhodpsn_7TM"/>
</dbReference>
<dbReference type="InterPro" id="IPR000725">
    <property type="entry name" value="Olfact_rcpt"/>
</dbReference>
<dbReference type="PANTHER" id="PTHR48018">
    <property type="entry name" value="OLFACTORY RECEPTOR"/>
    <property type="match status" value="1"/>
</dbReference>
<dbReference type="Pfam" id="PF13853">
    <property type="entry name" value="7tm_4"/>
    <property type="match status" value="1"/>
</dbReference>
<dbReference type="PRINTS" id="PR00237">
    <property type="entry name" value="GPCRRHODOPSN"/>
</dbReference>
<dbReference type="PRINTS" id="PR00245">
    <property type="entry name" value="OLFACTORYR"/>
</dbReference>
<dbReference type="SUPFAM" id="SSF81321">
    <property type="entry name" value="Family A G protein-coupled receptor-like"/>
    <property type="match status" value="1"/>
</dbReference>
<dbReference type="PROSITE" id="PS00237">
    <property type="entry name" value="G_PROTEIN_RECEP_F1_1"/>
    <property type="match status" value="1"/>
</dbReference>
<dbReference type="PROSITE" id="PS50262">
    <property type="entry name" value="G_PROTEIN_RECEP_F1_2"/>
    <property type="match status" value="1"/>
</dbReference>
<comment type="function">
    <text evidence="4">Odorant receptor.</text>
</comment>
<comment type="subcellular location">
    <subcellularLocation>
        <location>Cell membrane</location>
        <topology>Multi-pass membrane protein</topology>
    </subcellularLocation>
</comment>
<comment type="similarity">
    <text evidence="2">Belongs to the G-protein coupled receptor 1 family.</text>
</comment>
<comment type="online information" name="Human Olfactory Receptor Data Exploratorium (HORDE)">
    <link uri="http://genome.weizmann.ac.il/horde/card/index/symbol:OR5AC2"/>
</comment>
<reference key="1">
    <citation type="journal article" date="2006" name="Nature">
        <title>The DNA sequence, annotation and analysis of human chromosome 3.</title>
        <authorList>
            <person name="Muzny D.M."/>
            <person name="Scherer S.E."/>
            <person name="Kaul R."/>
            <person name="Wang J."/>
            <person name="Yu J."/>
            <person name="Sudbrak R."/>
            <person name="Buhay C.J."/>
            <person name="Chen R."/>
            <person name="Cree A."/>
            <person name="Ding Y."/>
            <person name="Dugan-Rocha S."/>
            <person name="Gill R."/>
            <person name="Gunaratne P."/>
            <person name="Harris R.A."/>
            <person name="Hawes A.C."/>
            <person name="Hernandez J."/>
            <person name="Hodgson A.V."/>
            <person name="Hume J."/>
            <person name="Jackson A."/>
            <person name="Khan Z.M."/>
            <person name="Kovar-Smith C."/>
            <person name="Lewis L.R."/>
            <person name="Lozado R.J."/>
            <person name="Metzker M.L."/>
            <person name="Milosavljevic A."/>
            <person name="Miner G.R."/>
            <person name="Morgan M.B."/>
            <person name="Nazareth L.V."/>
            <person name="Scott G."/>
            <person name="Sodergren E."/>
            <person name="Song X.-Z."/>
            <person name="Steffen D."/>
            <person name="Wei S."/>
            <person name="Wheeler D.A."/>
            <person name="Wright M.W."/>
            <person name="Worley K.C."/>
            <person name="Yuan Y."/>
            <person name="Zhang Z."/>
            <person name="Adams C.Q."/>
            <person name="Ansari-Lari M.A."/>
            <person name="Ayele M."/>
            <person name="Brown M.J."/>
            <person name="Chen G."/>
            <person name="Chen Z."/>
            <person name="Clendenning J."/>
            <person name="Clerc-Blankenburg K.P."/>
            <person name="Chen R."/>
            <person name="Chen Z."/>
            <person name="Davis C."/>
            <person name="Delgado O."/>
            <person name="Dinh H.H."/>
            <person name="Dong W."/>
            <person name="Draper H."/>
            <person name="Ernst S."/>
            <person name="Fu G."/>
            <person name="Gonzalez-Garay M.L."/>
            <person name="Garcia D.K."/>
            <person name="Gillett W."/>
            <person name="Gu J."/>
            <person name="Hao B."/>
            <person name="Haugen E."/>
            <person name="Havlak P."/>
            <person name="He X."/>
            <person name="Hennig S."/>
            <person name="Hu S."/>
            <person name="Huang W."/>
            <person name="Jackson L.R."/>
            <person name="Jacob L.S."/>
            <person name="Kelly S.H."/>
            <person name="Kube M."/>
            <person name="Levy R."/>
            <person name="Li Z."/>
            <person name="Liu B."/>
            <person name="Liu J."/>
            <person name="Liu W."/>
            <person name="Lu J."/>
            <person name="Maheshwari M."/>
            <person name="Nguyen B.-V."/>
            <person name="Okwuonu G.O."/>
            <person name="Palmeiri A."/>
            <person name="Pasternak S."/>
            <person name="Perez L.M."/>
            <person name="Phelps K.A."/>
            <person name="Plopper F.J."/>
            <person name="Qiang B."/>
            <person name="Raymond C."/>
            <person name="Rodriguez R."/>
            <person name="Saenphimmachak C."/>
            <person name="Santibanez J."/>
            <person name="Shen H."/>
            <person name="Shen Y."/>
            <person name="Subramanian S."/>
            <person name="Tabor P.E."/>
            <person name="Verduzco D."/>
            <person name="Waldron L."/>
            <person name="Wang J."/>
            <person name="Wang J."/>
            <person name="Wang Q."/>
            <person name="Williams G.A."/>
            <person name="Wong G.K.-S."/>
            <person name="Yao Z."/>
            <person name="Zhang J."/>
            <person name="Zhang X."/>
            <person name="Zhao G."/>
            <person name="Zhou J."/>
            <person name="Zhou Y."/>
            <person name="Nelson D."/>
            <person name="Lehrach H."/>
            <person name="Reinhardt R."/>
            <person name="Naylor S.L."/>
            <person name="Yang H."/>
            <person name="Olson M."/>
            <person name="Weinstock G."/>
            <person name="Gibbs R.A."/>
        </authorList>
    </citation>
    <scope>NUCLEOTIDE SEQUENCE [LARGE SCALE GENOMIC DNA]</scope>
</reference>
<reference key="2">
    <citation type="journal article" date="2000" name="Proc. Natl. Acad. Sci. U.S.A.">
        <title>The olfactory receptor gene repertoire in primates and mouse: evidence for reduction of the functional fraction in primates.</title>
        <authorList>
            <person name="Rouquier S."/>
            <person name="Blancher A."/>
            <person name="Giorgi D."/>
        </authorList>
    </citation>
    <scope>NUCLEOTIDE SEQUENCE [GENOMIC DNA] OF 126-287</scope>
    <scope>VARIANT ILE-200</scope>
</reference>